<proteinExistence type="evidence at protein level"/>
<sequence length="383" mass="41732">MEDDDEIQSIPSPGDSSLSPQAPPSPPILPTNDVTVAVVKKPQPGLSSQSPSMNALALVVHTPSVTGGGGSGNRNGRGGGGGSGGGGGGRDDCWSEEATKVLIEAWGDRFSEPGKGTLKQQHWKEVAEIVNKSRQCKYPKTDIQCKNRIDTVKKKYKQEKAKIASGDGPSKWVFFKKLESLIGGTTTFIASSKASEKAPMGGALGNSRSSMFKRQTKGNQIVQQQQEKRGSDSMRWHFRKRSASETESESDPEPEASPEESAESLPPLQPIQPLSFHMPKRLKVDKSGGGGSGVGDVARAILGFTEAYEKAETAKLKLMAELEKERMKFAKEMELQRMQFLKTQLEITQNNQEEEERSRQRGERRIVDDDDDRNGKNNGNVSS</sequence>
<gene>
    <name evidence="8" type="primary">ASIL1</name>
    <name evidence="10" type="ordered locus">At1g54060</name>
    <name evidence="11" type="ORF">F15I1.14</name>
</gene>
<organism evidence="11">
    <name type="scientific">Arabidopsis thaliana</name>
    <name type="common">Mouse-ear cress</name>
    <dbReference type="NCBI Taxonomy" id="3702"/>
    <lineage>
        <taxon>Eukaryota</taxon>
        <taxon>Viridiplantae</taxon>
        <taxon>Streptophyta</taxon>
        <taxon>Embryophyta</taxon>
        <taxon>Tracheophyta</taxon>
        <taxon>Spermatophyta</taxon>
        <taxon>Magnoliopsida</taxon>
        <taxon>eudicotyledons</taxon>
        <taxon>Gunneridae</taxon>
        <taxon>Pentapetalae</taxon>
        <taxon>rosids</taxon>
        <taxon>malvids</taxon>
        <taxon>Brassicales</taxon>
        <taxon>Brassicaceae</taxon>
        <taxon>Camelineae</taxon>
        <taxon>Arabidopsis</taxon>
    </lineage>
</organism>
<accession>Q9SYG2</accession>
<evidence type="ECO:0000255" key="1"/>
<evidence type="ECO:0000255" key="2">
    <source>
        <dbReference type="PROSITE-ProRule" id="PRU00133"/>
    </source>
</evidence>
<evidence type="ECO:0000255" key="3">
    <source>
        <dbReference type="PROSITE-ProRule" id="PRU00768"/>
    </source>
</evidence>
<evidence type="ECO:0000256" key="4">
    <source>
        <dbReference type="SAM" id="MobiDB-lite"/>
    </source>
</evidence>
<evidence type="ECO:0000269" key="5">
    <source>
    </source>
</evidence>
<evidence type="ECO:0000269" key="6">
    <source>
    </source>
</evidence>
<evidence type="ECO:0000269" key="7">
    <source>
    </source>
</evidence>
<evidence type="ECO:0000303" key="8">
    <source>
    </source>
</evidence>
<evidence type="ECO:0000305" key="9"/>
<evidence type="ECO:0000312" key="10">
    <source>
        <dbReference type="Araport" id="AT1G54060"/>
    </source>
</evidence>
<evidence type="ECO:0000312" key="11">
    <source>
        <dbReference type="EMBL" id="AAD25778.1"/>
    </source>
</evidence>
<reference key="1">
    <citation type="journal article" date="2000" name="Nature">
        <title>Sequence and analysis of chromosome 1 of the plant Arabidopsis thaliana.</title>
        <authorList>
            <person name="Theologis A."/>
            <person name="Ecker J.R."/>
            <person name="Palm C.J."/>
            <person name="Federspiel N.A."/>
            <person name="Kaul S."/>
            <person name="White O."/>
            <person name="Alonso J."/>
            <person name="Altafi H."/>
            <person name="Araujo R."/>
            <person name="Bowman C.L."/>
            <person name="Brooks S.Y."/>
            <person name="Buehler E."/>
            <person name="Chan A."/>
            <person name="Chao Q."/>
            <person name="Chen H."/>
            <person name="Cheuk R.F."/>
            <person name="Chin C.W."/>
            <person name="Chung M.K."/>
            <person name="Conn L."/>
            <person name="Conway A.B."/>
            <person name="Conway A.R."/>
            <person name="Creasy T.H."/>
            <person name="Dewar K."/>
            <person name="Dunn P."/>
            <person name="Etgu P."/>
            <person name="Feldblyum T.V."/>
            <person name="Feng J.-D."/>
            <person name="Fong B."/>
            <person name="Fujii C.Y."/>
            <person name="Gill J.E."/>
            <person name="Goldsmith A.D."/>
            <person name="Haas B."/>
            <person name="Hansen N.F."/>
            <person name="Hughes B."/>
            <person name="Huizar L."/>
            <person name="Hunter J.L."/>
            <person name="Jenkins J."/>
            <person name="Johnson-Hopson C."/>
            <person name="Khan S."/>
            <person name="Khaykin E."/>
            <person name="Kim C.J."/>
            <person name="Koo H.L."/>
            <person name="Kremenetskaia I."/>
            <person name="Kurtz D.B."/>
            <person name="Kwan A."/>
            <person name="Lam B."/>
            <person name="Langin-Hooper S."/>
            <person name="Lee A."/>
            <person name="Lee J.M."/>
            <person name="Lenz C.A."/>
            <person name="Li J.H."/>
            <person name="Li Y.-P."/>
            <person name="Lin X."/>
            <person name="Liu S.X."/>
            <person name="Liu Z.A."/>
            <person name="Luros J.S."/>
            <person name="Maiti R."/>
            <person name="Marziali A."/>
            <person name="Militscher J."/>
            <person name="Miranda M."/>
            <person name="Nguyen M."/>
            <person name="Nierman W.C."/>
            <person name="Osborne B.I."/>
            <person name="Pai G."/>
            <person name="Peterson J."/>
            <person name="Pham P.K."/>
            <person name="Rizzo M."/>
            <person name="Rooney T."/>
            <person name="Rowley D."/>
            <person name="Sakano H."/>
            <person name="Salzberg S.L."/>
            <person name="Schwartz J.R."/>
            <person name="Shinn P."/>
            <person name="Southwick A.M."/>
            <person name="Sun H."/>
            <person name="Tallon L.J."/>
            <person name="Tambunga G."/>
            <person name="Toriumi M.J."/>
            <person name="Town C.D."/>
            <person name="Utterback T."/>
            <person name="Van Aken S."/>
            <person name="Vaysberg M."/>
            <person name="Vysotskaia V.S."/>
            <person name="Walker M."/>
            <person name="Wu D."/>
            <person name="Yu G."/>
            <person name="Fraser C.M."/>
            <person name="Venter J.C."/>
            <person name="Davis R.W."/>
        </authorList>
    </citation>
    <scope>NUCLEOTIDE SEQUENCE [LARGE SCALE GENOMIC DNA]</scope>
    <source>
        <strain>cv. Columbia</strain>
    </source>
</reference>
<reference key="2">
    <citation type="journal article" date="2017" name="Plant J.">
        <title>Araport11: a complete reannotation of the Arabidopsis thaliana reference genome.</title>
        <authorList>
            <person name="Cheng C.Y."/>
            <person name="Krishnakumar V."/>
            <person name="Chan A.P."/>
            <person name="Thibaud-Nissen F."/>
            <person name="Schobel S."/>
            <person name="Town C.D."/>
        </authorList>
    </citation>
    <scope>GENOME REANNOTATION</scope>
    <source>
        <strain>cv. Columbia</strain>
    </source>
</reference>
<reference key="3">
    <citation type="journal article" date="2003" name="Science">
        <title>Empirical analysis of transcriptional activity in the Arabidopsis genome.</title>
        <authorList>
            <person name="Yamada K."/>
            <person name="Lim J."/>
            <person name="Dale J.M."/>
            <person name="Chen H."/>
            <person name="Shinn P."/>
            <person name="Palm C.J."/>
            <person name="Southwick A.M."/>
            <person name="Wu H.C."/>
            <person name="Kim C.J."/>
            <person name="Nguyen M."/>
            <person name="Pham P.K."/>
            <person name="Cheuk R.F."/>
            <person name="Karlin-Newmann G."/>
            <person name="Liu S.X."/>
            <person name="Lam B."/>
            <person name="Sakano H."/>
            <person name="Wu T."/>
            <person name="Yu G."/>
            <person name="Miranda M."/>
            <person name="Quach H.L."/>
            <person name="Tripp M."/>
            <person name="Chang C.H."/>
            <person name="Lee J.M."/>
            <person name="Toriumi M.J."/>
            <person name="Chan M.M."/>
            <person name="Tang C.C."/>
            <person name="Onodera C.S."/>
            <person name="Deng J.M."/>
            <person name="Akiyama K."/>
            <person name="Ansari Y."/>
            <person name="Arakawa T."/>
            <person name="Banh J."/>
            <person name="Banno F."/>
            <person name="Bowser L."/>
            <person name="Brooks S.Y."/>
            <person name="Carninci P."/>
            <person name="Chao Q."/>
            <person name="Choy N."/>
            <person name="Enju A."/>
            <person name="Goldsmith A.D."/>
            <person name="Gurjal M."/>
            <person name="Hansen N.F."/>
            <person name="Hayashizaki Y."/>
            <person name="Johnson-Hopson C."/>
            <person name="Hsuan V.W."/>
            <person name="Iida K."/>
            <person name="Karnes M."/>
            <person name="Khan S."/>
            <person name="Koesema E."/>
            <person name="Ishida J."/>
            <person name="Jiang P.X."/>
            <person name="Jones T."/>
            <person name="Kawai J."/>
            <person name="Kamiya A."/>
            <person name="Meyers C."/>
            <person name="Nakajima M."/>
            <person name="Narusaka M."/>
            <person name="Seki M."/>
            <person name="Sakurai T."/>
            <person name="Satou M."/>
            <person name="Tamse R."/>
            <person name="Vaysberg M."/>
            <person name="Wallender E.K."/>
            <person name="Wong C."/>
            <person name="Yamamura Y."/>
            <person name="Yuan S."/>
            <person name="Shinozaki K."/>
            <person name="Davis R.W."/>
            <person name="Theologis A."/>
            <person name="Ecker J.R."/>
        </authorList>
    </citation>
    <scope>NUCLEOTIDE SEQUENCE [LARGE SCALE MRNA]</scope>
    <source>
        <strain>cv. Columbia</strain>
    </source>
</reference>
<reference key="4">
    <citation type="submission" date="2002-03" db="EMBL/GenBank/DDBJ databases">
        <title>Full-length cDNA from Arabidopsis thaliana.</title>
        <authorList>
            <person name="Brover V.V."/>
            <person name="Troukhan M.E."/>
            <person name="Alexandrov N.A."/>
            <person name="Lu Y.-P."/>
            <person name="Flavell R.B."/>
            <person name="Feldmann K.A."/>
        </authorList>
    </citation>
    <scope>NUCLEOTIDE SEQUENCE [LARGE SCALE MRNA]</scope>
</reference>
<reference key="5">
    <citation type="journal article" date="2009" name="Plant Cell">
        <title>Repression of seed maturation genes by a trihelix transcriptional repressor in Arabidopsis seedlings.</title>
        <authorList>
            <person name="Gao M.J."/>
            <person name="Lydiate D.J."/>
            <person name="Li X."/>
            <person name="Lui H."/>
            <person name="Gjetvaj B."/>
            <person name="Hegedus D.D."/>
            <person name="Rozwadowski K."/>
        </authorList>
    </citation>
    <scope>FUNCTION</scope>
    <scope>SUBCELLULAR LOCATION</scope>
    <scope>DEVELOPMENTAL STAGE</scope>
    <scope>DISRUPTION PHENOTYPE</scope>
</reference>
<reference key="6">
    <citation type="journal article" date="2009" name="Plant Physiol.">
        <title>Large-scale Arabidopsis phosphoproteome profiling reveals novel chloroplast kinase substrates and phosphorylation networks.</title>
        <authorList>
            <person name="Reiland S."/>
            <person name="Messerli G."/>
            <person name="Baerenfaller K."/>
            <person name="Gerrits B."/>
            <person name="Endler A."/>
            <person name="Grossmann J."/>
            <person name="Gruissem W."/>
            <person name="Baginsky S."/>
        </authorList>
    </citation>
    <scope>IDENTIFICATION BY MASS SPECTROMETRY [LARGE SCALE ANALYSIS]</scope>
</reference>
<reference key="7">
    <citation type="journal article" date="2011" name="Plant Physiol.">
        <title>MicroRNAs regulate the timing of embryo maturation in Arabidopsis.</title>
        <authorList>
            <person name="Willmann M.R."/>
            <person name="Mehalick A.J."/>
            <person name="Packer R.L."/>
            <person name="Jenik P.D."/>
        </authorList>
    </citation>
    <scope>FUNCTION</scope>
</reference>
<reference key="8">
    <citation type="journal article" date="2011" name="Plant Signal. Behav.">
        <title>ASIL1 is required for proper timing of seed filling in Arabidopsis.</title>
        <authorList>
            <person name="Gao M.J."/>
            <person name="Li X."/>
            <person name="Lui H."/>
            <person name="Gropp G.M."/>
            <person name="Lydiate D.D."/>
            <person name="Wei S."/>
            <person name="Hegedus D.D."/>
        </authorList>
    </citation>
    <scope>FUNCTION</scope>
</reference>
<dbReference type="EMBL" id="AC006577">
    <property type="protein sequence ID" value="AAD25778.1"/>
    <property type="molecule type" value="Genomic_DNA"/>
</dbReference>
<dbReference type="EMBL" id="CP002684">
    <property type="protein sequence ID" value="AEE33042.1"/>
    <property type="molecule type" value="Genomic_DNA"/>
</dbReference>
<dbReference type="EMBL" id="AF360325">
    <property type="protein sequence ID" value="AAK26035.1"/>
    <property type="molecule type" value="mRNA"/>
</dbReference>
<dbReference type="EMBL" id="AY056333">
    <property type="protein sequence ID" value="AAL07182.1"/>
    <property type="molecule type" value="mRNA"/>
</dbReference>
<dbReference type="EMBL" id="AY084772">
    <property type="protein sequence ID" value="AAM61340.1"/>
    <property type="molecule type" value="mRNA"/>
</dbReference>
<dbReference type="PIR" id="C96581">
    <property type="entry name" value="C96581"/>
</dbReference>
<dbReference type="RefSeq" id="NP_564648.1">
    <property type="nucleotide sequence ID" value="NM_104283.3"/>
</dbReference>
<dbReference type="SMR" id="Q9SYG2"/>
<dbReference type="BioGRID" id="27069">
    <property type="interactions" value="60"/>
</dbReference>
<dbReference type="FunCoup" id="Q9SYG2">
    <property type="interactions" value="82"/>
</dbReference>
<dbReference type="IntAct" id="Q9SYG2">
    <property type="interactions" value="62"/>
</dbReference>
<dbReference type="STRING" id="3702.Q9SYG2"/>
<dbReference type="iPTMnet" id="Q9SYG2"/>
<dbReference type="PaxDb" id="3702-AT1G54060.1"/>
<dbReference type="ProteomicsDB" id="246860"/>
<dbReference type="EnsemblPlants" id="AT1G54060.1">
    <property type="protein sequence ID" value="AT1G54060.1"/>
    <property type="gene ID" value="AT1G54060"/>
</dbReference>
<dbReference type="GeneID" id="841844"/>
<dbReference type="Gramene" id="AT1G54060.1">
    <property type="protein sequence ID" value="AT1G54060.1"/>
    <property type="gene ID" value="AT1G54060"/>
</dbReference>
<dbReference type="KEGG" id="ath:AT1G54060"/>
<dbReference type="Araport" id="AT1G54060"/>
<dbReference type="TAIR" id="AT1G54060">
    <property type="gene designation" value="ASIL1"/>
</dbReference>
<dbReference type="eggNOG" id="KOG4282">
    <property type="taxonomic scope" value="Eukaryota"/>
</dbReference>
<dbReference type="HOGENOM" id="CLU_042856_1_0_1"/>
<dbReference type="InParanoid" id="Q9SYG2"/>
<dbReference type="OMA" id="CKYAKTD"/>
<dbReference type="OrthoDB" id="2019351at2759"/>
<dbReference type="PhylomeDB" id="Q9SYG2"/>
<dbReference type="CD-CODE" id="4299E36E">
    <property type="entry name" value="Nucleolus"/>
</dbReference>
<dbReference type="PRO" id="PR:Q9SYG2"/>
<dbReference type="Proteomes" id="UP000006548">
    <property type="component" value="Chromosome 1"/>
</dbReference>
<dbReference type="ExpressionAtlas" id="Q9SYG2">
    <property type="expression patterns" value="baseline and differential"/>
</dbReference>
<dbReference type="GO" id="GO:0005730">
    <property type="term" value="C:nucleolus"/>
    <property type="evidence" value="ECO:0007005"/>
    <property type="project" value="TAIR"/>
</dbReference>
<dbReference type="GO" id="GO:0005634">
    <property type="term" value="C:nucleus"/>
    <property type="evidence" value="ECO:0000314"/>
    <property type="project" value="TAIR"/>
</dbReference>
<dbReference type="GO" id="GO:0003700">
    <property type="term" value="F:DNA-binding transcription factor activity"/>
    <property type="evidence" value="ECO:0000250"/>
    <property type="project" value="TAIR"/>
</dbReference>
<dbReference type="GO" id="GO:0043565">
    <property type="term" value="F:sequence-specific DNA binding"/>
    <property type="evidence" value="ECO:0000314"/>
    <property type="project" value="TAIR"/>
</dbReference>
<dbReference type="GO" id="GO:0000976">
    <property type="term" value="F:transcription cis-regulatory region binding"/>
    <property type="evidence" value="ECO:0000353"/>
    <property type="project" value="TAIR"/>
</dbReference>
<dbReference type="GO" id="GO:0009793">
    <property type="term" value="P:embryo development ending in seed dormancy"/>
    <property type="evidence" value="ECO:0000315"/>
    <property type="project" value="TAIR"/>
</dbReference>
<dbReference type="GO" id="GO:0006355">
    <property type="term" value="P:regulation of DNA-templated transcription"/>
    <property type="evidence" value="ECO:0000304"/>
    <property type="project" value="TAIR"/>
</dbReference>
<dbReference type="GO" id="GO:0009733">
    <property type="term" value="P:response to auxin"/>
    <property type="evidence" value="ECO:0000270"/>
    <property type="project" value="TAIR"/>
</dbReference>
<dbReference type="GO" id="GO:0010431">
    <property type="term" value="P:seed maturation"/>
    <property type="evidence" value="ECO:0000315"/>
    <property type="project" value="TAIR"/>
</dbReference>
<dbReference type="FunFam" id="1.10.10.60:FF:000104">
    <property type="entry name" value="trihelix transcription factor ASIL2"/>
    <property type="match status" value="1"/>
</dbReference>
<dbReference type="Gene3D" id="1.10.10.60">
    <property type="entry name" value="Homeodomain-like"/>
    <property type="match status" value="1"/>
</dbReference>
<dbReference type="InterPro" id="IPR044823">
    <property type="entry name" value="ASIL1/2-like"/>
</dbReference>
<dbReference type="InterPro" id="IPR044822">
    <property type="entry name" value="Myb_DNA-bind_4"/>
</dbReference>
<dbReference type="PANTHER" id="PTHR31307:SF39">
    <property type="entry name" value="TRIHELIX TRANSCRIPTION FACTOR ASIL1"/>
    <property type="match status" value="1"/>
</dbReference>
<dbReference type="PANTHER" id="PTHR31307">
    <property type="entry name" value="TRIHELIX TRANSCRIPTION FACTOR ASIL2"/>
    <property type="match status" value="1"/>
</dbReference>
<dbReference type="Pfam" id="PF13837">
    <property type="entry name" value="Myb_DNA-bind_4"/>
    <property type="match status" value="1"/>
</dbReference>
<comment type="function">
    <text evidence="5 6 7">Transcription repressor that binds specific DNA sequence such as the GT-box-like motif 5'-CGTGATT-3' in the AT2S3 promoter. Negative regulator of seed maturation genes during seed germination and seedling development. May target GT-box-containing embryonic genes by competing with the binding of transcriptional activators to this promoter region (PubMed:19155348). Contributes to the maintenance and control of seed filling (PubMed:22231199) and may repress the maturation program during early embryogenesis (PubMed:21330492).</text>
</comment>
<comment type="interaction">
    <interactant intactId="EBI-4424669">
        <id>Q9SYG2</id>
    </interactant>
    <interactant intactId="EBI-4457957">
        <id>Q8GXR6</id>
        <label>At3g58630/F14P22_220</label>
    </interactant>
    <organismsDiffer>false</organismsDiffer>
    <experiments>3</experiments>
</comment>
<comment type="interaction">
    <interactant intactId="EBI-4424669">
        <id>Q9SYG2</id>
    </interactant>
    <interactant intactId="EBI-1998580">
        <id>Q8VZI9</id>
        <label>ENAP1</label>
    </interactant>
    <organismsDiffer>false</organismsDiffer>
    <experiments>4</experiments>
</comment>
<comment type="interaction">
    <interactant intactId="EBI-4424669">
        <id>Q9SYG2</id>
    </interactant>
    <interactant intactId="EBI-25523050">
        <id>Q9LSI7</id>
        <label>MYB35</label>
    </interactant>
    <organismsDiffer>false</organismsDiffer>
    <experiments>3</experiments>
</comment>
<comment type="interaction">
    <interactant intactId="EBI-4424669">
        <id>Q9SYG2</id>
    </interactant>
    <interactant intactId="EBI-15192203">
        <id>F4K0Q7</id>
        <label>VFP5</label>
    </interactant>
    <organismsDiffer>false</organismsDiffer>
    <experiments>4</experiments>
</comment>
<comment type="subcellular location">
    <subcellularLocation>
        <location evidence="3 5">Nucleus</location>
    </subcellularLocation>
</comment>
<comment type="developmental stage">
    <text evidence="5">Induced by seed imbibition with a peak after 1 hour and then steadily decreases to be barely detectable at day 3.</text>
</comment>
<comment type="disruption phenotype">
    <text evidence="5">Reduced growth of leaves, petioles, stems and siliques. Delayed flowering.</text>
</comment>
<feature type="chain" id="PRO_0000430502" description="Trihelix transcription factor ASIL1">
    <location>
        <begin position="1"/>
        <end position="383"/>
    </location>
</feature>
<feature type="domain" description="Myb-like" evidence="2">
    <location>
        <begin position="94"/>
        <end position="153"/>
    </location>
</feature>
<feature type="region of interest" description="Disordered" evidence="4">
    <location>
        <begin position="1"/>
        <end position="32"/>
    </location>
</feature>
<feature type="region of interest" description="Disordered" evidence="4">
    <location>
        <begin position="61"/>
        <end position="94"/>
    </location>
</feature>
<feature type="region of interest" description="Disordered" evidence="4">
    <location>
        <begin position="189"/>
        <end position="295"/>
    </location>
</feature>
<feature type="region of interest" description="Disordered" evidence="4">
    <location>
        <begin position="346"/>
        <end position="383"/>
    </location>
</feature>
<feature type="coiled-coil region" evidence="1">
    <location>
        <begin position="304"/>
        <end position="365"/>
    </location>
</feature>
<feature type="short sequence motif" description="Bipartite nuclear localization signal" evidence="3 8">
    <location>
        <begin position="228"/>
        <end position="241"/>
    </location>
</feature>
<feature type="compositionally biased region" description="Gly residues" evidence="4">
    <location>
        <begin position="66"/>
        <end position="88"/>
    </location>
</feature>
<feature type="compositionally biased region" description="Polar residues" evidence="4">
    <location>
        <begin position="206"/>
        <end position="225"/>
    </location>
</feature>
<feature type="compositionally biased region" description="Basic and acidic residues" evidence="4">
    <location>
        <begin position="226"/>
        <end position="235"/>
    </location>
</feature>
<feature type="compositionally biased region" description="Acidic residues" evidence="4">
    <location>
        <begin position="246"/>
        <end position="262"/>
    </location>
</feature>
<feature type="compositionally biased region" description="Low complexity" evidence="4">
    <location>
        <begin position="263"/>
        <end position="274"/>
    </location>
</feature>
<feature type="compositionally biased region" description="Basic and acidic residues" evidence="4">
    <location>
        <begin position="356"/>
        <end position="367"/>
    </location>
</feature>
<protein>
    <recommendedName>
        <fullName evidence="9">Trihelix transcription factor ASIL1</fullName>
    </recommendedName>
    <alternativeName>
        <fullName evidence="8">6B-interacting protein 1-like 1</fullName>
    </alternativeName>
    <alternativeName>
        <fullName evidence="9">Trihelix DNA-binding protein ASIL1</fullName>
    </alternativeName>
</protein>
<keyword id="KW-0175">Coiled coil</keyword>
<keyword id="KW-0238">DNA-binding</keyword>
<keyword id="KW-0539">Nucleus</keyword>
<keyword id="KW-1185">Reference proteome</keyword>
<keyword id="KW-0678">Repressor</keyword>
<keyword id="KW-0804">Transcription</keyword>
<keyword id="KW-0805">Transcription regulation</keyword>
<name>ASIL1_ARATH</name>